<keyword id="KW-0227">DNA damage</keyword>
<keyword id="KW-0233">DNA recombination</keyword>
<keyword id="KW-0234">DNA repair</keyword>
<keyword id="KW-1185">Reference proteome</keyword>
<accession>Q8DGS9</accession>
<protein>
    <recommendedName>
        <fullName evidence="1">DNA repair protein RecO</fullName>
    </recommendedName>
    <alternativeName>
        <fullName evidence="1">Recombination protein O</fullName>
    </alternativeName>
</protein>
<evidence type="ECO:0000255" key="1">
    <source>
        <dbReference type="HAMAP-Rule" id="MF_00201"/>
    </source>
</evidence>
<name>RECO_THEVB</name>
<proteinExistence type="inferred from homology"/>
<feature type="chain" id="PRO_1000099423" description="DNA repair protein RecO">
    <location>
        <begin position="1"/>
        <end position="279"/>
    </location>
</feature>
<organism>
    <name type="scientific">Thermosynechococcus vestitus (strain NIES-2133 / IAM M-273 / BP-1)</name>
    <dbReference type="NCBI Taxonomy" id="197221"/>
    <lineage>
        <taxon>Bacteria</taxon>
        <taxon>Bacillati</taxon>
        <taxon>Cyanobacteriota</taxon>
        <taxon>Cyanophyceae</taxon>
        <taxon>Acaryochloridales</taxon>
        <taxon>Thermosynechococcaceae</taxon>
        <taxon>Thermosynechococcus</taxon>
    </lineage>
</organism>
<comment type="function">
    <text evidence="1">Involved in DNA repair and RecF pathway recombination.</text>
</comment>
<comment type="similarity">
    <text evidence="1">Belongs to the RecO family.</text>
</comment>
<gene>
    <name evidence="1" type="primary">recO</name>
    <name type="ordered locus">tlr2234</name>
</gene>
<sequence length="279" mass="30850">MGRTYRTIGINLKAMPLGESDRLLSVFSRDRGLLKLVAPHSRGSRSRLGGRVDLFVVNDLFISPGRNLDRILQAETVATYQGLHHQLTTLTAAQYLGEVVLYQIHPQQPQPELFDWFCATLDQLQGASSRAALAILVRGLCGILRLGGIAPEWYQCHESGCKIAVPTADTDWRLGFSFAGGGVFRIRADHPVGNESVAGAGGDRQLTASEVRLGQWLAMPTTQFLARDEFLTQAEAYPLSVWLSLERVLRQYLQFHLEQPLRVPPLLDSCFSPVAVSQP</sequence>
<dbReference type="EMBL" id="BA000039">
    <property type="protein sequence ID" value="BAC09786.1"/>
    <property type="molecule type" value="Genomic_DNA"/>
</dbReference>
<dbReference type="RefSeq" id="NP_683024.1">
    <property type="nucleotide sequence ID" value="NC_004113.1"/>
</dbReference>
<dbReference type="RefSeq" id="WP_011058068.1">
    <property type="nucleotide sequence ID" value="NC_004113.1"/>
</dbReference>
<dbReference type="SMR" id="Q8DGS9"/>
<dbReference type="STRING" id="197221.gene:10748845"/>
<dbReference type="EnsemblBacteria" id="BAC09786">
    <property type="protein sequence ID" value="BAC09786"/>
    <property type="gene ID" value="BAC09786"/>
</dbReference>
<dbReference type="KEGG" id="tel:tlr2234"/>
<dbReference type="PATRIC" id="fig|197221.4.peg.2342"/>
<dbReference type="eggNOG" id="COG1381">
    <property type="taxonomic scope" value="Bacteria"/>
</dbReference>
<dbReference type="Proteomes" id="UP000000440">
    <property type="component" value="Chromosome"/>
</dbReference>
<dbReference type="GO" id="GO:0043590">
    <property type="term" value="C:bacterial nucleoid"/>
    <property type="evidence" value="ECO:0007669"/>
    <property type="project" value="TreeGrafter"/>
</dbReference>
<dbReference type="GO" id="GO:0006310">
    <property type="term" value="P:DNA recombination"/>
    <property type="evidence" value="ECO:0007669"/>
    <property type="project" value="UniProtKB-UniRule"/>
</dbReference>
<dbReference type="GO" id="GO:0006302">
    <property type="term" value="P:double-strand break repair"/>
    <property type="evidence" value="ECO:0007669"/>
    <property type="project" value="TreeGrafter"/>
</dbReference>
<dbReference type="Gene3D" id="2.40.50.140">
    <property type="entry name" value="Nucleic acid-binding proteins"/>
    <property type="match status" value="1"/>
</dbReference>
<dbReference type="Gene3D" id="1.20.1440.120">
    <property type="entry name" value="Recombination protein O, C-terminal domain"/>
    <property type="match status" value="1"/>
</dbReference>
<dbReference type="HAMAP" id="MF_00201">
    <property type="entry name" value="RecO"/>
    <property type="match status" value="1"/>
</dbReference>
<dbReference type="InterPro" id="IPR037278">
    <property type="entry name" value="ARFGAP/RecO"/>
</dbReference>
<dbReference type="InterPro" id="IPR022572">
    <property type="entry name" value="DNA_rep/recomb_RecO_N"/>
</dbReference>
<dbReference type="InterPro" id="IPR012340">
    <property type="entry name" value="NA-bd_OB-fold"/>
</dbReference>
<dbReference type="InterPro" id="IPR003717">
    <property type="entry name" value="RecO"/>
</dbReference>
<dbReference type="InterPro" id="IPR042242">
    <property type="entry name" value="RecO_C"/>
</dbReference>
<dbReference type="NCBIfam" id="TIGR00613">
    <property type="entry name" value="reco"/>
    <property type="match status" value="1"/>
</dbReference>
<dbReference type="PANTHER" id="PTHR33991">
    <property type="entry name" value="DNA REPAIR PROTEIN RECO"/>
    <property type="match status" value="1"/>
</dbReference>
<dbReference type="PANTHER" id="PTHR33991:SF1">
    <property type="entry name" value="DNA REPAIR PROTEIN RECO"/>
    <property type="match status" value="1"/>
</dbReference>
<dbReference type="Pfam" id="PF02565">
    <property type="entry name" value="RecO_C"/>
    <property type="match status" value="1"/>
</dbReference>
<dbReference type="Pfam" id="PF11967">
    <property type="entry name" value="RecO_N"/>
    <property type="match status" value="1"/>
</dbReference>
<dbReference type="SUPFAM" id="SSF57863">
    <property type="entry name" value="ArfGap/RecO-like zinc finger"/>
    <property type="match status" value="1"/>
</dbReference>
<dbReference type="SUPFAM" id="SSF50249">
    <property type="entry name" value="Nucleic acid-binding proteins"/>
    <property type="match status" value="1"/>
</dbReference>
<reference key="1">
    <citation type="journal article" date="2002" name="DNA Res.">
        <title>Complete genome structure of the thermophilic cyanobacterium Thermosynechococcus elongatus BP-1.</title>
        <authorList>
            <person name="Nakamura Y."/>
            <person name="Kaneko T."/>
            <person name="Sato S."/>
            <person name="Ikeuchi M."/>
            <person name="Katoh H."/>
            <person name="Sasamoto S."/>
            <person name="Watanabe A."/>
            <person name="Iriguchi M."/>
            <person name="Kawashima K."/>
            <person name="Kimura T."/>
            <person name="Kishida Y."/>
            <person name="Kiyokawa C."/>
            <person name="Kohara M."/>
            <person name="Matsumoto M."/>
            <person name="Matsuno A."/>
            <person name="Nakazaki N."/>
            <person name="Shimpo S."/>
            <person name="Sugimoto M."/>
            <person name="Takeuchi C."/>
            <person name="Yamada M."/>
            <person name="Tabata S."/>
        </authorList>
    </citation>
    <scope>NUCLEOTIDE SEQUENCE [LARGE SCALE GENOMIC DNA]</scope>
    <source>
        <strain>NIES-2133 / IAM M-273 / BP-1</strain>
    </source>
</reference>